<evidence type="ECO:0000255" key="1">
    <source>
        <dbReference type="HAMAP-Rule" id="MF_01824"/>
    </source>
</evidence>
<evidence type="ECO:0000305" key="2"/>
<protein>
    <recommendedName>
        <fullName evidence="1">Pyridoxal 5'-phosphate synthase subunit PdxS</fullName>
        <shortName evidence="1">PLP synthase subunit PdxS</shortName>
        <ecNumber evidence="1">4.3.3.6</ecNumber>
    </recommendedName>
    <alternativeName>
        <fullName evidence="1">Pdx1</fullName>
    </alternativeName>
</protein>
<keyword id="KW-0456">Lyase</keyword>
<keyword id="KW-0663">Pyridoxal phosphate</keyword>
<keyword id="KW-0704">Schiff base</keyword>
<feature type="chain" id="PRO_0000109440" description="Pyridoxal 5'-phosphate synthase subunit PdxS">
    <location>
        <begin position="1" status="less than"/>
        <end position="237"/>
    </location>
</feature>
<feature type="active site" description="Schiff-base intermediate with D-ribose 5-phosphate" evidence="1">
    <location>
        <position position="19"/>
    </location>
</feature>
<feature type="binding site" evidence="1">
    <location>
        <position position="91"/>
    </location>
    <ligand>
        <name>D-ribose 5-phosphate</name>
        <dbReference type="ChEBI" id="CHEBI:78346"/>
    </ligand>
</feature>
<feature type="binding site" evidence="1">
    <location>
        <position position="103"/>
    </location>
    <ligand>
        <name>D-glyceraldehyde 3-phosphate</name>
        <dbReference type="ChEBI" id="CHEBI:59776"/>
    </ligand>
</feature>
<feature type="binding site" evidence="1">
    <location>
        <position position="157"/>
    </location>
    <ligand>
        <name>D-ribose 5-phosphate</name>
        <dbReference type="ChEBI" id="CHEBI:78346"/>
    </ligand>
</feature>
<feature type="binding site" evidence="1">
    <location>
        <begin position="178"/>
        <end position="179"/>
    </location>
    <ligand>
        <name>D-ribose 5-phosphate</name>
        <dbReference type="ChEBI" id="CHEBI:78346"/>
    </ligand>
</feature>
<feature type="non-terminal residue">
    <location>
        <position position="1"/>
    </location>
</feature>
<accession>Q50841</accession>
<organism>
    <name type="scientific">Methanococcus vannielii</name>
    <dbReference type="NCBI Taxonomy" id="2187"/>
    <lineage>
        <taxon>Archaea</taxon>
        <taxon>Methanobacteriati</taxon>
        <taxon>Methanobacteriota</taxon>
        <taxon>Methanomada group</taxon>
        <taxon>Methanococci</taxon>
        <taxon>Methanococcales</taxon>
        <taxon>Methanococcaceae</taxon>
        <taxon>Methanococcus</taxon>
    </lineage>
</organism>
<proteinExistence type="inferred from homology"/>
<name>PDXS_METVA</name>
<gene>
    <name evidence="1" type="primary">pdxS</name>
</gene>
<comment type="function">
    <text evidence="1">Catalyzes the formation of pyridoxal 5'-phosphate from ribose 5-phosphate (RBP), glyceraldehyde 3-phosphate (G3P) and ammonia. The ammonia is provided by the PdxT subunit. Can also use ribulose 5-phosphate and dihydroxyacetone phosphate as substrates, resulting from enzyme-catalyzed isomerization of RBP and G3P, respectively.</text>
</comment>
<comment type="catalytic activity">
    <reaction evidence="1">
        <text>aldehydo-D-ribose 5-phosphate + D-glyceraldehyde 3-phosphate + L-glutamine = pyridoxal 5'-phosphate + L-glutamate + phosphate + 3 H2O + H(+)</text>
        <dbReference type="Rhea" id="RHEA:31507"/>
        <dbReference type="ChEBI" id="CHEBI:15377"/>
        <dbReference type="ChEBI" id="CHEBI:15378"/>
        <dbReference type="ChEBI" id="CHEBI:29985"/>
        <dbReference type="ChEBI" id="CHEBI:43474"/>
        <dbReference type="ChEBI" id="CHEBI:58273"/>
        <dbReference type="ChEBI" id="CHEBI:58359"/>
        <dbReference type="ChEBI" id="CHEBI:59776"/>
        <dbReference type="ChEBI" id="CHEBI:597326"/>
        <dbReference type="EC" id="4.3.3.6"/>
    </reaction>
</comment>
<comment type="pathway">
    <text evidence="1">Cofactor biosynthesis; pyridoxal 5'-phosphate biosynthesis.</text>
</comment>
<comment type="subunit">
    <text evidence="1">In the presence of PdxT, forms a dodecamer of heterodimers.</text>
</comment>
<comment type="similarity">
    <text evidence="1">Belongs to the PdxS/SNZ family.</text>
</comment>
<comment type="sequence caution" evidence="2">
    <conflict type="frameshift">
        <sequence resource="EMBL-CDS" id="CAA25434"/>
    </conflict>
</comment>
<sequence>DPDMIFEIKDAVSIPVMAKARIGHFVEAQVLESIGVDMIDESEVLTPADEINHINKKAFTAPFVCGARNLGEALRRIDEGAAMIRTKGEAGTGNVVEAVKHMRAVNEGIARVVGYHEMGLEAELVQMARNELKVPMEIILEVAKLKRLPVVNFAAGGIATPADAALMMQMGCDGVFVGSGIFKSGNPEIRAKAIVEATYNFDKPELIGEVSKNLGEAMVGINIDQIPEEMLLAKRGI</sequence>
<reference key="1">
    <citation type="journal article" date="1984" name="Mol. Gen. Genet.">
        <title>Apparent operon for a 5S ribosomal RNA gene and for tRNA genes in the archaebacterium Methanococcus vannielii.</title>
        <authorList>
            <person name="Wich G."/>
            <person name="Jarsch M."/>
            <person name="Boeck A."/>
        </authorList>
    </citation>
    <scope>NUCLEOTIDE SEQUENCE [GENOMIC DNA]</scope>
</reference>
<dbReference type="EC" id="4.3.3.6" evidence="1"/>
<dbReference type="EMBL" id="X00916">
    <property type="protein sequence ID" value="CAA25434.1"/>
    <property type="status" value="ALT_FRAME"/>
    <property type="molecule type" value="Genomic_DNA"/>
</dbReference>
<dbReference type="PIR" id="S28731">
    <property type="entry name" value="S28731"/>
</dbReference>
<dbReference type="SMR" id="Q50841"/>
<dbReference type="UniPathway" id="UPA00245"/>
<dbReference type="GO" id="GO:0036381">
    <property type="term" value="F:pyridoxal 5'-phosphate synthase (glutamine hydrolysing) activity"/>
    <property type="evidence" value="ECO:0007669"/>
    <property type="project" value="UniProtKB-EC"/>
</dbReference>
<dbReference type="GO" id="GO:0006520">
    <property type="term" value="P:amino acid metabolic process"/>
    <property type="evidence" value="ECO:0007669"/>
    <property type="project" value="TreeGrafter"/>
</dbReference>
<dbReference type="GO" id="GO:0042823">
    <property type="term" value="P:pyridoxal phosphate biosynthetic process"/>
    <property type="evidence" value="ECO:0007669"/>
    <property type="project" value="UniProtKB-UniPathway"/>
</dbReference>
<dbReference type="GO" id="GO:0008615">
    <property type="term" value="P:pyridoxine biosynthetic process"/>
    <property type="evidence" value="ECO:0007669"/>
    <property type="project" value="TreeGrafter"/>
</dbReference>
<dbReference type="Gene3D" id="3.20.20.70">
    <property type="entry name" value="Aldolase class I"/>
    <property type="match status" value="1"/>
</dbReference>
<dbReference type="InterPro" id="IPR013785">
    <property type="entry name" value="Aldolase_TIM"/>
</dbReference>
<dbReference type="InterPro" id="IPR001852">
    <property type="entry name" value="PdxS/SNZ"/>
</dbReference>
<dbReference type="InterPro" id="IPR033755">
    <property type="entry name" value="PdxS/SNZ_N"/>
</dbReference>
<dbReference type="InterPro" id="IPR011060">
    <property type="entry name" value="RibuloseP-bd_barrel"/>
</dbReference>
<dbReference type="PANTHER" id="PTHR31829">
    <property type="entry name" value="PYRIDOXAL 5'-PHOSPHATE SYNTHASE SUBUNIT SNZ1-RELATED"/>
    <property type="match status" value="1"/>
</dbReference>
<dbReference type="PANTHER" id="PTHR31829:SF0">
    <property type="entry name" value="PYRIDOXAL 5'-PHOSPHATE SYNTHASE SUBUNIT SNZ1-RELATED"/>
    <property type="match status" value="1"/>
</dbReference>
<dbReference type="Pfam" id="PF01680">
    <property type="entry name" value="SOR_SNZ"/>
    <property type="match status" value="1"/>
</dbReference>
<dbReference type="SUPFAM" id="SSF51366">
    <property type="entry name" value="Ribulose-phoshate binding barrel"/>
    <property type="match status" value="1"/>
</dbReference>
<dbReference type="PROSITE" id="PS01235">
    <property type="entry name" value="PDXS_SNZ_1"/>
    <property type="match status" value="1"/>
</dbReference>
<dbReference type="PROSITE" id="PS51129">
    <property type="entry name" value="PDXS_SNZ_2"/>
    <property type="match status" value="1"/>
</dbReference>